<evidence type="ECO:0000250" key="1">
    <source>
        <dbReference type="UniProtKB" id="Q61850"/>
    </source>
</evidence>
<evidence type="ECO:0000250" key="2">
    <source>
        <dbReference type="UniProtKB" id="Q99958"/>
    </source>
</evidence>
<evidence type="ECO:0000255" key="3">
    <source>
        <dbReference type="PROSITE-ProRule" id="PRU00089"/>
    </source>
</evidence>
<evidence type="ECO:0000256" key="4">
    <source>
        <dbReference type="SAM" id="MobiDB-lite"/>
    </source>
</evidence>
<evidence type="ECO:0000305" key="5"/>
<evidence type="ECO:0007744" key="6">
    <source>
    </source>
</evidence>
<protein>
    <recommendedName>
        <fullName>Forkhead box protein C2</fullName>
    </recommendedName>
    <alternativeName>
        <fullName>Brain factor 3</fullName>
        <shortName>BF-3</shortName>
    </alternativeName>
    <alternativeName>
        <fullName>HFH-BF-3</fullName>
    </alternativeName>
</protein>
<dbReference type="EMBL" id="AABR06099147">
    <property type="status" value="NOT_ANNOTATED_CDS"/>
    <property type="molecule type" value="Genomic_DNA"/>
</dbReference>
<dbReference type="EMBL" id="CH473972">
    <property type="protein sequence ID" value="EDL92716.1"/>
    <property type="molecule type" value="Genomic_DNA"/>
</dbReference>
<dbReference type="EMBL" id="L13193">
    <property type="protein sequence ID" value="AAA41320.1"/>
    <property type="molecule type" value="mRNA"/>
</dbReference>
<dbReference type="PIR" id="I60918">
    <property type="entry name" value="I60918"/>
</dbReference>
<dbReference type="RefSeq" id="NP_001095150.1">
    <property type="nucleotide sequence ID" value="NM_001101680.1"/>
</dbReference>
<dbReference type="SMR" id="Q63246"/>
<dbReference type="FunCoup" id="Q63246">
    <property type="interactions" value="47"/>
</dbReference>
<dbReference type="STRING" id="10116.ENSRNOP00000065254"/>
<dbReference type="GlyGen" id="Q63246">
    <property type="glycosylation" value="2 sites"/>
</dbReference>
<dbReference type="iPTMnet" id="Q63246"/>
<dbReference type="PhosphoSitePlus" id="Q63246"/>
<dbReference type="PaxDb" id="10116-ENSRNOP00000065254"/>
<dbReference type="Ensembl" id="ENSRNOT00000072369.2">
    <property type="protein sequence ID" value="ENSRNOP00000065254.1"/>
    <property type="gene ID" value="ENSRNOG00000047446.2"/>
</dbReference>
<dbReference type="GeneID" id="171356"/>
<dbReference type="KEGG" id="rno:171356"/>
<dbReference type="AGR" id="RGD:621703"/>
<dbReference type="CTD" id="2303"/>
<dbReference type="RGD" id="621703">
    <property type="gene designation" value="Foxc2"/>
</dbReference>
<dbReference type="eggNOG" id="KOG2294">
    <property type="taxonomic scope" value="Eukaryota"/>
</dbReference>
<dbReference type="GeneTree" id="ENSGT00940000162619"/>
<dbReference type="HOGENOM" id="CLU_035722_3_1_1"/>
<dbReference type="InParanoid" id="Q63246"/>
<dbReference type="OMA" id="REMFTSH"/>
<dbReference type="OrthoDB" id="5954824at2759"/>
<dbReference type="PRO" id="PR:Q63246"/>
<dbReference type="Proteomes" id="UP000002494">
    <property type="component" value="Chromosome 19"/>
</dbReference>
<dbReference type="Proteomes" id="UP000234681">
    <property type="component" value="Chromosome 19"/>
</dbReference>
<dbReference type="Bgee" id="ENSRNOG00000047446">
    <property type="expression patterns" value="Expressed in kidney and 7 other cell types or tissues"/>
</dbReference>
<dbReference type="GO" id="GO:0005634">
    <property type="term" value="C:nucleus"/>
    <property type="evidence" value="ECO:0000266"/>
    <property type="project" value="RGD"/>
</dbReference>
<dbReference type="GO" id="GO:0031490">
    <property type="term" value="F:chromatin DNA binding"/>
    <property type="evidence" value="ECO:0000266"/>
    <property type="project" value="RGD"/>
</dbReference>
<dbReference type="GO" id="GO:0003677">
    <property type="term" value="F:DNA binding"/>
    <property type="evidence" value="ECO:0000314"/>
    <property type="project" value="RGD"/>
</dbReference>
<dbReference type="GO" id="GO:0001216">
    <property type="term" value="F:DNA-binding transcription activator activity"/>
    <property type="evidence" value="ECO:0000266"/>
    <property type="project" value="RGD"/>
</dbReference>
<dbReference type="GO" id="GO:0001228">
    <property type="term" value="F:DNA-binding transcription activator activity, RNA polymerase II-specific"/>
    <property type="evidence" value="ECO:0000266"/>
    <property type="project" value="RGD"/>
</dbReference>
<dbReference type="GO" id="GO:0003700">
    <property type="term" value="F:DNA-binding transcription factor activity"/>
    <property type="evidence" value="ECO:0000250"/>
    <property type="project" value="UniProtKB"/>
</dbReference>
<dbReference type="GO" id="GO:0000981">
    <property type="term" value="F:DNA-binding transcription factor activity, RNA polymerase II-specific"/>
    <property type="evidence" value="ECO:0000266"/>
    <property type="project" value="RGD"/>
</dbReference>
<dbReference type="GO" id="GO:0042802">
    <property type="term" value="F:identical protein binding"/>
    <property type="evidence" value="ECO:0000266"/>
    <property type="project" value="RGD"/>
</dbReference>
<dbReference type="GO" id="GO:1990841">
    <property type="term" value="F:promoter-specific chromatin binding"/>
    <property type="evidence" value="ECO:0000250"/>
    <property type="project" value="UniProtKB"/>
</dbReference>
<dbReference type="GO" id="GO:0000978">
    <property type="term" value="F:RNA polymerase II cis-regulatory region sequence-specific DNA binding"/>
    <property type="evidence" value="ECO:0000266"/>
    <property type="project" value="RGD"/>
</dbReference>
<dbReference type="GO" id="GO:0000977">
    <property type="term" value="F:RNA polymerase II transcription regulatory region sequence-specific DNA binding"/>
    <property type="evidence" value="ECO:0000266"/>
    <property type="project" value="RGD"/>
</dbReference>
<dbReference type="GO" id="GO:0043565">
    <property type="term" value="F:sequence-specific DNA binding"/>
    <property type="evidence" value="ECO:0000266"/>
    <property type="project" value="RGD"/>
</dbReference>
<dbReference type="GO" id="GO:1990837">
    <property type="term" value="F:sequence-specific double-stranded DNA binding"/>
    <property type="evidence" value="ECO:0000266"/>
    <property type="project" value="RGD"/>
</dbReference>
<dbReference type="GO" id="GO:0000976">
    <property type="term" value="F:transcription cis-regulatory region binding"/>
    <property type="evidence" value="ECO:0000266"/>
    <property type="project" value="RGD"/>
</dbReference>
<dbReference type="GO" id="GO:0009653">
    <property type="term" value="P:anatomical structure morphogenesis"/>
    <property type="evidence" value="ECO:0000318"/>
    <property type="project" value="GO_Central"/>
</dbReference>
<dbReference type="GO" id="GO:0003275">
    <property type="term" value="P:apoptotic process involved in outflow tract morphogenesis"/>
    <property type="evidence" value="ECO:0000266"/>
    <property type="project" value="RGD"/>
</dbReference>
<dbReference type="GO" id="GO:0048844">
    <property type="term" value="P:artery morphogenesis"/>
    <property type="evidence" value="ECO:0000266"/>
    <property type="project" value="RGD"/>
</dbReference>
<dbReference type="GO" id="GO:0001568">
    <property type="term" value="P:blood vessel development"/>
    <property type="evidence" value="ECO:0000266"/>
    <property type="project" value="RGD"/>
</dbReference>
<dbReference type="GO" id="GO:0097746">
    <property type="term" value="P:blood vessel diameter maintenance"/>
    <property type="evidence" value="ECO:0000266"/>
    <property type="project" value="RGD"/>
</dbReference>
<dbReference type="GO" id="GO:0001974">
    <property type="term" value="P:blood vessel remodeling"/>
    <property type="evidence" value="ECO:0000266"/>
    <property type="project" value="RGD"/>
</dbReference>
<dbReference type="GO" id="GO:0001569">
    <property type="term" value="P:branching involved in blood vessel morphogenesis"/>
    <property type="evidence" value="ECO:0000266"/>
    <property type="project" value="RGD"/>
</dbReference>
<dbReference type="GO" id="GO:0043010">
    <property type="term" value="P:camera-type eye development"/>
    <property type="evidence" value="ECO:0000266"/>
    <property type="project" value="RGD"/>
</dbReference>
<dbReference type="GO" id="GO:0060038">
    <property type="term" value="P:cardiac muscle cell proliferation"/>
    <property type="evidence" value="ECO:0000266"/>
    <property type="project" value="RGD"/>
</dbReference>
<dbReference type="GO" id="GO:0030154">
    <property type="term" value="P:cell differentiation"/>
    <property type="evidence" value="ECO:0000318"/>
    <property type="project" value="GO_Central"/>
</dbReference>
<dbReference type="GO" id="GO:0008283">
    <property type="term" value="P:cell population proliferation"/>
    <property type="evidence" value="ECO:0000266"/>
    <property type="project" value="RGD"/>
</dbReference>
<dbReference type="GO" id="GO:0030199">
    <property type="term" value="P:collagen fibril organization"/>
    <property type="evidence" value="ECO:0000266"/>
    <property type="project" value="RGD"/>
</dbReference>
<dbReference type="GO" id="GO:0048701">
    <property type="term" value="P:embryonic cranial skeleton morphogenesis"/>
    <property type="evidence" value="ECO:0000266"/>
    <property type="project" value="RGD"/>
</dbReference>
<dbReference type="GO" id="GO:0035050">
    <property type="term" value="P:embryonic heart tube development"/>
    <property type="evidence" value="ECO:0000266"/>
    <property type="project" value="RGD"/>
</dbReference>
<dbReference type="GO" id="GO:0048704">
    <property type="term" value="P:embryonic skeletal system morphogenesis"/>
    <property type="evidence" value="ECO:0000266"/>
    <property type="project" value="RGD"/>
</dbReference>
<dbReference type="GO" id="GO:0048703">
    <property type="term" value="P:embryonic viscerocranium morphogenesis"/>
    <property type="evidence" value="ECO:0000266"/>
    <property type="project" value="RGD"/>
</dbReference>
<dbReference type="GO" id="GO:0072011">
    <property type="term" value="P:glomerular endothelium development"/>
    <property type="evidence" value="ECO:0000266"/>
    <property type="project" value="RGD"/>
</dbReference>
<dbReference type="GO" id="GO:0072144">
    <property type="term" value="P:glomerular mesangial cell development"/>
    <property type="evidence" value="ECO:0000266"/>
    <property type="project" value="RGD"/>
</dbReference>
<dbReference type="GO" id="GO:0007507">
    <property type="term" value="P:heart development"/>
    <property type="evidence" value="ECO:0000266"/>
    <property type="project" value="RGD"/>
</dbReference>
<dbReference type="GO" id="GO:0003007">
    <property type="term" value="P:heart morphogenesis"/>
    <property type="evidence" value="ECO:0000266"/>
    <property type="project" value="RGD"/>
</dbReference>
<dbReference type="GO" id="GO:0008286">
    <property type="term" value="P:insulin receptor signaling pathway"/>
    <property type="evidence" value="ECO:0000266"/>
    <property type="project" value="RGD"/>
</dbReference>
<dbReference type="GO" id="GO:0001822">
    <property type="term" value="P:kidney development"/>
    <property type="evidence" value="ECO:0000266"/>
    <property type="project" value="RGD"/>
</dbReference>
<dbReference type="GO" id="GO:0001945">
    <property type="term" value="P:lymph vessel development"/>
    <property type="evidence" value="ECO:0000266"/>
    <property type="project" value="RGD"/>
</dbReference>
<dbReference type="GO" id="GO:0001946">
    <property type="term" value="P:lymphangiogenesis"/>
    <property type="evidence" value="ECO:0000266"/>
    <property type="project" value="RGD"/>
</dbReference>
<dbReference type="GO" id="GO:0001656">
    <property type="term" value="P:metanephros development"/>
    <property type="evidence" value="ECO:0000266"/>
    <property type="project" value="RGD"/>
</dbReference>
<dbReference type="GO" id="GO:1902257">
    <property type="term" value="P:negative regulation of apoptotic process involved in outflow tract morphogenesis"/>
    <property type="evidence" value="ECO:0000266"/>
    <property type="project" value="RGD"/>
</dbReference>
<dbReference type="GO" id="GO:0120163">
    <property type="term" value="P:negative regulation of cold-induced thermogenesis"/>
    <property type="evidence" value="ECO:0000250"/>
    <property type="project" value="YuBioLab"/>
</dbReference>
<dbReference type="GO" id="GO:0000122">
    <property type="term" value="P:negative regulation of transcription by RNA polymerase II"/>
    <property type="evidence" value="ECO:0000266"/>
    <property type="project" value="RGD"/>
</dbReference>
<dbReference type="GO" id="GO:0014032">
    <property type="term" value="P:neural crest cell development"/>
    <property type="evidence" value="ECO:0000266"/>
    <property type="project" value="RGD"/>
</dbReference>
<dbReference type="GO" id="GO:0007219">
    <property type="term" value="P:Notch signaling pathway"/>
    <property type="evidence" value="ECO:0000266"/>
    <property type="project" value="RGD"/>
</dbReference>
<dbReference type="GO" id="GO:0001503">
    <property type="term" value="P:ossification"/>
    <property type="evidence" value="ECO:0000266"/>
    <property type="project" value="RGD"/>
</dbReference>
<dbReference type="GO" id="GO:0048341">
    <property type="term" value="P:paraxial mesoderm formation"/>
    <property type="evidence" value="ECO:0000266"/>
    <property type="project" value="RGD"/>
</dbReference>
<dbReference type="GO" id="GO:0048343">
    <property type="term" value="P:paraxial mesodermal cell fate commitment"/>
    <property type="evidence" value="ECO:0000266"/>
    <property type="project" value="RGD"/>
</dbReference>
<dbReference type="GO" id="GO:0072112">
    <property type="term" value="P:podocyte differentiation"/>
    <property type="evidence" value="ECO:0000266"/>
    <property type="project" value="RGD"/>
</dbReference>
<dbReference type="GO" id="GO:0033630">
    <property type="term" value="P:positive regulation of cell adhesion mediated by integrin"/>
    <property type="evidence" value="ECO:0000266"/>
    <property type="project" value="RGD"/>
</dbReference>
<dbReference type="GO" id="GO:0090050">
    <property type="term" value="P:positive regulation of cell migration involved in sprouting angiogenesis"/>
    <property type="evidence" value="ECO:0000266"/>
    <property type="project" value="RGD"/>
</dbReference>
<dbReference type="GO" id="GO:0045893">
    <property type="term" value="P:positive regulation of DNA-templated transcription"/>
    <property type="evidence" value="ECO:0000266"/>
    <property type="project" value="RGD"/>
</dbReference>
<dbReference type="GO" id="GO:0010595">
    <property type="term" value="P:positive regulation of endothelial cell migration"/>
    <property type="evidence" value="ECO:0000266"/>
    <property type="project" value="RGD"/>
</dbReference>
<dbReference type="GO" id="GO:0045944">
    <property type="term" value="P:positive regulation of transcription by RNA polymerase II"/>
    <property type="evidence" value="ECO:0000250"/>
    <property type="project" value="UniProtKB"/>
</dbReference>
<dbReference type="GO" id="GO:0035470">
    <property type="term" value="P:positive regulation of vascular wound healing"/>
    <property type="evidence" value="ECO:0000266"/>
    <property type="project" value="RGD"/>
</dbReference>
<dbReference type="GO" id="GO:0006355">
    <property type="term" value="P:regulation of DNA-templated transcription"/>
    <property type="evidence" value="ECO:0000304"/>
    <property type="project" value="RGD"/>
</dbReference>
<dbReference type="GO" id="GO:0046620">
    <property type="term" value="P:regulation of organ growth"/>
    <property type="evidence" value="ECO:0000266"/>
    <property type="project" value="RGD"/>
</dbReference>
<dbReference type="GO" id="GO:0006357">
    <property type="term" value="P:regulation of transcription by RNA polymerase II"/>
    <property type="evidence" value="ECO:0000318"/>
    <property type="project" value="GO_Central"/>
</dbReference>
<dbReference type="GO" id="GO:0009725">
    <property type="term" value="P:response to hormone"/>
    <property type="evidence" value="ECO:0000266"/>
    <property type="project" value="RGD"/>
</dbReference>
<dbReference type="GO" id="GO:0001501">
    <property type="term" value="P:skeletal system development"/>
    <property type="evidence" value="ECO:0000266"/>
    <property type="project" value="RGD"/>
</dbReference>
<dbReference type="GO" id="GO:0001756">
    <property type="term" value="P:somitogenesis"/>
    <property type="evidence" value="ECO:0000266"/>
    <property type="project" value="RGD"/>
</dbReference>
<dbReference type="GO" id="GO:0001657">
    <property type="term" value="P:ureteric bud development"/>
    <property type="evidence" value="ECO:0000266"/>
    <property type="project" value="RGD"/>
</dbReference>
<dbReference type="GO" id="GO:0048010">
    <property type="term" value="P:vascular endothelial growth factor receptor signaling pathway"/>
    <property type="evidence" value="ECO:0000266"/>
    <property type="project" value="RGD"/>
</dbReference>
<dbReference type="GO" id="GO:0055010">
    <property type="term" value="P:ventricular cardiac muscle tissue morphogenesis"/>
    <property type="evidence" value="ECO:0000266"/>
    <property type="project" value="RGD"/>
</dbReference>
<dbReference type="CDD" id="cd20044">
    <property type="entry name" value="FH_FOXC1"/>
    <property type="match status" value="1"/>
</dbReference>
<dbReference type="FunFam" id="1.10.10.10:FF:000016">
    <property type="entry name" value="Forkhead box protein I1"/>
    <property type="match status" value="1"/>
</dbReference>
<dbReference type="Gene3D" id="1.10.10.10">
    <property type="entry name" value="Winged helix-like DNA-binding domain superfamily/Winged helix DNA-binding domain"/>
    <property type="match status" value="1"/>
</dbReference>
<dbReference type="InterPro" id="IPR001766">
    <property type="entry name" value="Fork_head_dom"/>
</dbReference>
<dbReference type="InterPro" id="IPR050211">
    <property type="entry name" value="FOX_domain-containing"/>
</dbReference>
<dbReference type="InterPro" id="IPR047391">
    <property type="entry name" value="FOXC1/C2-like_FH"/>
</dbReference>
<dbReference type="InterPro" id="IPR018122">
    <property type="entry name" value="TF_fork_head_CS_1"/>
</dbReference>
<dbReference type="InterPro" id="IPR030456">
    <property type="entry name" value="TF_fork_head_CS_2"/>
</dbReference>
<dbReference type="InterPro" id="IPR036388">
    <property type="entry name" value="WH-like_DNA-bd_sf"/>
</dbReference>
<dbReference type="InterPro" id="IPR036390">
    <property type="entry name" value="WH_DNA-bd_sf"/>
</dbReference>
<dbReference type="PANTHER" id="PTHR11829">
    <property type="entry name" value="FORKHEAD BOX PROTEIN"/>
    <property type="match status" value="1"/>
</dbReference>
<dbReference type="PANTHER" id="PTHR11829:SF189">
    <property type="entry name" value="FORKHEAD BOX PROTEIN C2"/>
    <property type="match status" value="1"/>
</dbReference>
<dbReference type="Pfam" id="PF00250">
    <property type="entry name" value="Forkhead"/>
    <property type="match status" value="1"/>
</dbReference>
<dbReference type="PRINTS" id="PR00053">
    <property type="entry name" value="FORKHEAD"/>
</dbReference>
<dbReference type="SMART" id="SM00339">
    <property type="entry name" value="FH"/>
    <property type="match status" value="1"/>
</dbReference>
<dbReference type="SUPFAM" id="SSF46785">
    <property type="entry name" value="Winged helix' DNA-binding domain"/>
    <property type="match status" value="1"/>
</dbReference>
<dbReference type="PROSITE" id="PS00657">
    <property type="entry name" value="FORK_HEAD_1"/>
    <property type="match status" value="1"/>
</dbReference>
<dbReference type="PROSITE" id="PS00658">
    <property type="entry name" value="FORK_HEAD_2"/>
    <property type="match status" value="1"/>
</dbReference>
<dbReference type="PROSITE" id="PS50039">
    <property type="entry name" value="FORK_HEAD_3"/>
    <property type="match status" value="1"/>
</dbReference>
<gene>
    <name type="primary">Foxc2</name>
    <name type="synonym">Hfhbf3</name>
</gene>
<keyword id="KW-0010">Activator</keyword>
<keyword id="KW-0217">Developmental protein</keyword>
<keyword id="KW-0238">DNA-binding</keyword>
<keyword id="KW-1017">Isopeptide bond</keyword>
<keyword id="KW-0488">Methylation</keyword>
<keyword id="KW-0539">Nucleus</keyword>
<keyword id="KW-0597">Phosphoprotein</keyword>
<keyword id="KW-1185">Reference proteome</keyword>
<keyword id="KW-0804">Transcription</keyword>
<keyword id="KW-0805">Transcription regulation</keyword>
<keyword id="KW-0832">Ubl conjugation</keyword>
<proteinExistence type="evidence at protein level"/>
<comment type="function">
    <text evidence="1">Transcriptional activator.</text>
</comment>
<comment type="subcellular location">
    <subcellularLocation>
        <location evidence="2">Nucleus</location>
    </subcellularLocation>
</comment>
<comment type="PTM">
    <text evidence="2">Phosphorylation regulates FOXC2 transcriptional activity by promoting its recruitment to chromatin.</text>
</comment>
<accession>Q63246</accession>
<accession>M0R736</accession>
<name>FOXC2_RAT</name>
<organism>
    <name type="scientific">Rattus norvegicus</name>
    <name type="common">Rat</name>
    <dbReference type="NCBI Taxonomy" id="10116"/>
    <lineage>
        <taxon>Eukaryota</taxon>
        <taxon>Metazoa</taxon>
        <taxon>Chordata</taxon>
        <taxon>Craniata</taxon>
        <taxon>Vertebrata</taxon>
        <taxon>Euteleostomi</taxon>
        <taxon>Mammalia</taxon>
        <taxon>Eutheria</taxon>
        <taxon>Euarchontoglires</taxon>
        <taxon>Glires</taxon>
        <taxon>Rodentia</taxon>
        <taxon>Myomorpha</taxon>
        <taxon>Muroidea</taxon>
        <taxon>Muridae</taxon>
        <taxon>Murinae</taxon>
        <taxon>Rattus</taxon>
    </lineage>
</organism>
<reference key="1">
    <citation type="journal article" date="2004" name="Nature">
        <title>Genome sequence of the Brown Norway rat yields insights into mammalian evolution.</title>
        <authorList>
            <person name="Gibbs R.A."/>
            <person name="Weinstock G.M."/>
            <person name="Metzker M.L."/>
            <person name="Muzny D.M."/>
            <person name="Sodergren E.J."/>
            <person name="Scherer S."/>
            <person name="Scott G."/>
            <person name="Steffen D."/>
            <person name="Worley K.C."/>
            <person name="Burch P.E."/>
            <person name="Okwuonu G."/>
            <person name="Hines S."/>
            <person name="Lewis L."/>
            <person name="Deramo C."/>
            <person name="Delgado O."/>
            <person name="Dugan-Rocha S."/>
            <person name="Miner G."/>
            <person name="Morgan M."/>
            <person name="Hawes A."/>
            <person name="Gill R."/>
            <person name="Holt R.A."/>
            <person name="Adams M.D."/>
            <person name="Amanatides P.G."/>
            <person name="Baden-Tillson H."/>
            <person name="Barnstead M."/>
            <person name="Chin S."/>
            <person name="Evans C.A."/>
            <person name="Ferriera S."/>
            <person name="Fosler C."/>
            <person name="Glodek A."/>
            <person name="Gu Z."/>
            <person name="Jennings D."/>
            <person name="Kraft C.L."/>
            <person name="Nguyen T."/>
            <person name="Pfannkoch C.M."/>
            <person name="Sitter C."/>
            <person name="Sutton G.G."/>
            <person name="Venter J.C."/>
            <person name="Woodage T."/>
            <person name="Smith D."/>
            <person name="Lee H.-M."/>
            <person name="Gustafson E."/>
            <person name="Cahill P."/>
            <person name="Kana A."/>
            <person name="Doucette-Stamm L."/>
            <person name="Weinstock K."/>
            <person name="Fechtel K."/>
            <person name="Weiss R.B."/>
            <person name="Dunn D.M."/>
            <person name="Green E.D."/>
            <person name="Blakesley R.W."/>
            <person name="Bouffard G.G."/>
            <person name="De Jong P.J."/>
            <person name="Osoegawa K."/>
            <person name="Zhu B."/>
            <person name="Marra M."/>
            <person name="Schein J."/>
            <person name="Bosdet I."/>
            <person name="Fjell C."/>
            <person name="Jones S."/>
            <person name="Krzywinski M."/>
            <person name="Mathewson C."/>
            <person name="Siddiqui A."/>
            <person name="Wye N."/>
            <person name="McPherson J."/>
            <person name="Zhao S."/>
            <person name="Fraser C.M."/>
            <person name="Shetty J."/>
            <person name="Shatsman S."/>
            <person name="Geer K."/>
            <person name="Chen Y."/>
            <person name="Abramzon S."/>
            <person name="Nierman W.C."/>
            <person name="Havlak P.H."/>
            <person name="Chen R."/>
            <person name="Durbin K.J."/>
            <person name="Egan A."/>
            <person name="Ren Y."/>
            <person name="Song X.-Z."/>
            <person name="Li B."/>
            <person name="Liu Y."/>
            <person name="Qin X."/>
            <person name="Cawley S."/>
            <person name="Cooney A.J."/>
            <person name="D'Souza L.M."/>
            <person name="Martin K."/>
            <person name="Wu J.Q."/>
            <person name="Gonzalez-Garay M.L."/>
            <person name="Jackson A.R."/>
            <person name="Kalafus K.J."/>
            <person name="McLeod M.P."/>
            <person name="Milosavljevic A."/>
            <person name="Virk D."/>
            <person name="Volkov A."/>
            <person name="Wheeler D.A."/>
            <person name="Zhang Z."/>
            <person name="Bailey J.A."/>
            <person name="Eichler E.E."/>
            <person name="Tuzun E."/>
            <person name="Birney E."/>
            <person name="Mongin E."/>
            <person name="Ureta-Vidal A."/>
            <person name="Woodwark C."/>
            <person name="Zdobnov E."/>
            <person name="Bork P."/>
            <person name="Suyama M."/>
            <person name="Torrents D."/>
            <person name="Alexandersson M."/>
            <person name="Trask B.J."/>
            <person name="Young J.M."/>
            <person name="Huang H."/>
            <person name="Wang H."/>
            <person name="Xing H."/>
            <person name="Daniels S."/>
            <person name="Gietzen D."/>
            <person name="Schmidt J."/>
            <person name="Stevens K."/>
            <person name="Vitt U."/>
            <person name="Wingrove J."/>
            <person name="Camara F."/>
            <person name="Mar Alba M."/>
            <person name="Abril J.F."/>
            <person name="Guigo R."/>
            <person name="Smit A."/>
            <person name="Dubchak I."/>
            <person name="Rubin E.M."/>
            <person name="Couronne O."/>
            <person name="Poliakov A."/>
            <person name="Huebner N."/>
            <person name="Ganten D."/>
            <person name="Goesele C."/>
            <person name="Hummel O."/>
            <person name="Kreitler T."/>
            <person name="Lee Y.-A."/>
            <person name="Monti J."/>
            <person name="Schulz H."/>
            <person name="Zimdahl H."/>
            <person name="Himmelbauer H."/>
            <person name="Lehrach H."/>
            <person name="Jacob H.J."/>
            <person name="Bromberg S."/>
            <person name="Gullings-Handley J."/>
            <person name="Jensen-Seaman M.I."/>
            <person name="Kwitek A.E."/>
            <person name="Lazar J."/>
            <person name="Pasko D."/>
            <person name="Tonellato P.J."/>
            <person name="Twigger S."/>
            <person name="Ponting C.P."/>
            <person name="Duarte J.M."/>
            <person name="Rice S."/>
            <person name="Goodstadt L."/>
            <person name="Beatson S.A."/>
            <person name="Emes R.D."/>
            <person name="Winter E.E."/>
            <person name="Webber C."/>
            <person name="Brandt P."/>
            <person name="Nyakatura G."/>
            <person name="Adetobi M."/>
            <person name="Chiaromonte F."/>
            <person name="Elnitski L."/>
            <person name="Eswara P."/>
            <person name="Hardison R.C."/>
            <person name="Hou M."/>
            <person name="Kolbe D."/>
            <person name="Makova K."/>
            <person name="Miller W."/>
            <person name="Nekrutenko A."/>
            <person name="Riemer C."/>
            <person name="Schwartz S."/>
            <person name="Taylor J."/>
            <person name="Yang S."/>
            <person name="Zhang Y."/>
            <person name="Lindpaintner K."/>
            <person name="Andrews T.D."/>
            <person name="Caccamo M."/>
            <person name="Clamp M."/>
            <person name="Clarke L."/>
            <person name="Curwen V."/>
            <person name="Durbin R.M."/>
            <person name="Eyras E."/>
            <person name="Searle S.M."/>
            <person name="Cooper G.M."/>
            <person name="Batzoglou S."/>
            <person name="Brudno M."/>
            <person name="Sidow A."/>
            <person name="Stone E.A."/>
            <person name="Payseur B.A."/>
            <person name="Bourque G."/>
            <person name="Lopez-Otin C."/>
            <person name="Puente X.S."/>
            <person name="Chakrabarti K."/>
            <person name="Chatterji S."/>
            <person name="Dewey C."/>
            <person name="Pachter L."/>
            <person name="Bray N."/>
            <person name="Yap V.B."/>
            <person name="Caspi A."/>
            <person name="Tesler G."/>
            <person name="Pevzner P.A."/>
            <person name="Haussler D."/>
            <person name="Roskin K.M."/>
            <person name="Baertsch R."/>
            <person name="Clawson H."/>
            <person name="Furey T.S."/>
            <person name="Hinrichs A.S."/>
            <person name="Karolchik D."/>
            <person name="Kent W.J."/>
            <person name="Rosenbloom K.R."/>
            <person name="Trumbower H."/>
            <person name="Weirauch M."/>
            <person name="Cooper D.N."/>
            <person name="Stenson P.D."/>
            <person name="Ma B."/>
            <person name="Brent M."/>
            <person name="Arumugam M."/>
            <person name="Shteynberg D."/>
            <person name="Copley R.R."/>
            <person name="Taylor M.S."/>
            <person name="Riethman H."/>
            <person name="Mudunuri U."/>
            <person name="Peterson J."/>
            <person name="Guyer M."/>
            <person name="Felsenfeld A."/>
            <person name="Old S."/>
            <person name="Mockrin S."/>
            <person name="Collins F.S."/>
        </authorList>
    </citation>
    <scope>NUCLEOTIDE SEQUENCE [LARGE SCALE GENOMIC DNA]</scope>
    <source>
        <strain>Brown Norway</strain>
    </source>
</reference>
<reference key="2">
    <citation type="submission" date="2005-07" db="EMBL/GenBank/DDBJ databases">
        <authorList>
            <person name="Mural R.J."/>
            <person name="Adams M.D."/>
            <person name="Myers E.W."/>
            <person name="Smith H.O."/>
            <person name="Venter J.C."/>
        </authorList>
    </citation>
    <scope>NUCLEOTIDE SEQUENCE [LARGE SCALE GENOMIC DNA]</scope>
</reference>
<reference key="3">
    <citation type="journal article" date="1993" name="Proc. Natl. Acad. Sci. U.S.A.">
        <title>Identification of nine tissue-specific transcription factors of the hepatocyte nuclear factor 3/forkhead DNA-binding-domain family.</title>
        <authorList>
            <person name="Clevidence D.E."/>
            <person name="Overdier D.G."/>
            <person name="Tao W."/>
            <person name="Qian X."/>
            <person name="Pani L."/>
            <person name="Lai E."/>
            <person name="Costa R.H."/>
        </authorList>
    </citation>
    <scope>NUCLEOTIDE SEQUENCE [MRNA] OF 69-169</scope>
    <source>
        <strain>Sprague-Dawley</strain>
    </source>
</reference>
<reference key="4">
    <citation type="journal article" date="2012" name="Nat. Commun.">
        <title>Quantitative maps of protein phosphorylation sites across 14 different rat organs and tissues.</title>
        <authorList>
            <person name="Lundby A."/>
            <person name="Secher A."/>
            <person name="Lage K."/>
            <person name="Nordsborg N.B."/>
            <person name="Dmytriyev A."/>
            <person name="Lundby C."/>
            <person name="Olsen J.V."/>
        </authorList>
    </citation>
    <scope>PHOSPHORYLATION [LARGE SCALE ANALYSIS] AT SER-231 AND SER-239</scope>
    <scope>IDENTIFICATION BY MASS SPECTROMETRY [LARGE SCALE ANALYSIS]</scope>
</reference>
<sequence>MQARYSVSDPNALGVVPYLSEQNYYRAAGSYGGMASPMGVYSGHPEQYGAGMGRSYAPYHHQPAAPKDLVKPPYSYIALITMAIQNAPEKKITLNGIYQFIMDRFPFYRENKQGWQNSIRHNLSLNECFVKVPRDDKKPGKGSYWTLDPDSYNMFENGSFLRRRRRFKKKDVPKDKEERAHLKEPPPASAKGAPTGTPVADGPKEAEKKVVVKSEAASPALPVITKVETLSPEGALQASPRSSASTPAGSPDGSLPEHHAAAPNGLPGFSVETIMTLRTSPPGGDLSPAAARAGLVVPPLALPYAAAPPAAYAQPCAQGLEAAGSAGYQCSMRAMSLYTGAERPAHVCVPPALDEALSDHPSGPGSPLGALNLAAGQEGALGASGHHHQHHSHLHPQAPPPAPQPPPAPQPATQATSWYLNHGGDLSHLPGHTFATQQQTFPNVREMFNSHRLGLDNSTLGESQVSNASCQLPYRATPSLYRHAAPYSYDCTKY</sequence>
<feature type="chain" id="PRO_0000091810" description="Forkhead box protein C2">
    <location>
        <begin position="1"/>
        <end position="494"/>
    </location>
</feature>
<feature type="DNA-binding region" description="Fork-head" evidence="3">
    <location>
        <begin position="71"/>
        <end position="165"/>
    </location>
</feature>
<feature type="region of interest" description="Disordered" evidence="4">
    <location>
        <begin position="166"/>
        <end position="213"/>
    </location>
</feature>
<feature type="region of interest" description="Disordered" evidence="4">
    <location>
        <begin position="233"/>
        <end position="267"/>
    </location>
</feature>
<feature type="region of interest" description="Disordered" evidence="4">
    <location>
        <begin position="380"/>
        <end position="422"/>
    </location>
</feature>
<feature type="compositionally biased region" description="Basic and acidic residues" evidence="4">
    <location>
        <begin position="170"/>
        <end position="184"/>
    </location>
</feature>
<feature type="compositionally biased region" description="Basic and acidic residues" evidence="4">
    <location>
        <begin position="202"/>
        <end position="212"/>
    </location>
</feature>
<feature type="compositionally biased region" description="Polar residues" evidence="4">
    <location>
        <begin position="239"/>
        <end position="248"/>
    </location>
</feature>
<feature type="compositionally biased region" description="Basic residues" evidence="4">
    <location>
        <begin position="385"/>
        <end position="394"/>
    </location>
</feature>
<feature type="compositionally biased region" description="Pro residues" evidence="4">
    <location>
        <begin position="397"/>
        <end position="410"/>
    </location>
</feature>
<feature type="modified residue" description="Phosphoserine" evidence="2">
    <location>
        <position position="214"/>
    </location>
</feature>
<feature type="modified residue" description="Phosphoserine" evidence="2">
    <location>
        <position position="218"/>
    </location>
</feature>
<feature type="modified residue" description="Phosphoserine" evidence="6">
    <location>
        <position position="231"/>
    </location>
</feature>
<feature type="modified residue" description="Phosphoserine" evidence="6">
    <location>
        <position position="239"/>
    </location>
</feature>
<feature type="modified residue" description="Phosphothreonine" evidence="2">
    <location>
        <position position="246"/>
    </location>
</feature>
<feature type="modified residue" description="Phosphoserine" evidence="2">
    <location>
        <position position="250"/>
    </location>
</feature>
<feature type="modified residue" description="Omega-N-methylarginine" evidence="1">
    <location>
        <position position="278"/>
    </location>
</feature>
<feature type="modified residue" description="Phosphoserine" evidence="2">
    <location>
        <position position="280"/>
    </location>
</feature>
<feature type="modified residue" description="Phosphoserine" evidence="2">
    <location>
        <position position="287"/>
    </location>
</feature>
<feature type="modified residue" description="Omega-N-methylarginine" evidence="1">
    <location>
        <position position="292"/>
    </location>
</feature>
<feature type="modified residue" description="Phosphoserine" evidence="2">
    <location>
        <position position="366"/>
    </location>
</feature>
<feature type="modified residue" description="Asymmetric dimethylarginine" evidence="1">
    <location>
        <position position="452"/>
    </location>
</feature>
<feature type="cross-link" description="Glycyl lysine isopeptide (Lys-Gly) (interchain with G-Cter in SUMO2)" evidence="2">
    <location>
        <position position="183"/>
    </location>
</feature>
<feature type="cross-link" description="Glycyl lysine isopeptide (Lys-Gly) (interchain with G-Cter in SUMO2)" evidence="2">
    <location>
        <position position="213"/>
    </location>
</feature>
<feature type="sequence conflict" description="In Ref. 3; AAA41320." evidence="5" ref="3">
    <original>I</original>
    <variation>S</variation>
    <location>
        <position position="80"/>
    </location>
</feature>